<protein>
    <recommendedName>
        <fullName evidence="1">Small ribosomal subunit protein uS4</fullName>
    </recommendedName>
    <alternativeName>
        <fullName evidence="3">30S ribosomal protein S4</fullName>
    </alternativeName>
    <alternativeName>
        <fullName>HmaS4</fullName>
    </alternativeName>
</protein>
<proteinExistence type="inferred from homology"/>
<gene>
    <name evidence="1" type="primary">rps4</name>
    <name type="ordered locus">rrnAC0059</name>
</gene>
<evidence type="ECO:0000255" key="1">
    <source>
        <dbReference type="HAMAP-Rule" id="MF_01306"/>
    </source>
</evidence>
<evidence type="ECO:0000256" key="2">
    <source>
        <dbReference type="SAM" id="MobiDB-lite"/>
    </source>
</evidence>
<evidence type="ECO:0000305" key="3"/>
<reference key="1">
    <citation type="journal article" date="1992" name="J. Biol. Chem.">
        <title>The alpha-operon equivalent genome region in the extreme halophilic archaebacterium Haloarcula (Halobacterium) marismortui.</title>
        <authorList>
            <person name="Scholzen T."/>
            <person name="Arndt E."/>
        </authorList>
    </citation>
    <scope>NUCLEOTIDE SEQUENCE [GENOMIC DNA]</scope>
</reference>
<reference key="2">
    <citation type="journal article" date="2004" name="Genome Res.">
        <title>Genome sequence of Haloarcula marismortui: a halophilic archaeon from the Dead Sea.</title>
        <authorList>
            <person name="Baliga N.S."/>
            <person name="Bonneau R."/>
            <person name="Facciotti M.T."/>
            <person name="Pan M."/>
            <person name="Glusman G."/>
            <person name="Deutsch E.W."/>
            <person name="Shannon P."/>
            <person name="Chiu Y."/>
            <person name="Weng R.S."/>
            <person name="Gan R.R."/>
            <person name="Hung P."/>
            <person name="Date S.V."/>
            <person name="Marcotte E."/>
            <person name="Hood L."/>
            <person name="Ng W.V."/>
        </authorList>
    </citation>
    <scope>NUCLEOTIDE SEQUENCE [LARGE SCALE GENOMIC DNA]</scope>
    <source>
        <strain>ATCC 43049 / DSM 3752 / JCM 8966 / VKM B-1809</strain>
    </source>
</reference>
<sequence>MALGSNTKFYETPNHPFQGERIADEANLIGRYGLKNKEELWRAQSELRGYRREARKLLGSAGEHETESEEFLARLKRYGILNEQDQLDDVLSLDVTDVLERRLQTVVYRKGYANTPEQARQFIVHGHIVLDDARVTRPGMTVETAVESSVGFDEHSSLSDELHPERAEAQE</sequence>
<feature type="chain" id="PRO_0000132505" description="Small ribosomal subunit protein uS4">
    <location>
        <begin position="1"/>
        <end position="171"/>
    </location>
</feature>
<feature type="domain" description="S4 RNA-binding" evidence="1">
    <location>
        <begin position="101"/>
        <end position="165"/>
    </location>
</feature>
<feature type="region of interest" description="Disordered" evidence="2">
    <location>
        <begin position="148"/>
        <end position="171"/>
    </location>
</feature>
<feature type="compositionally biased region" description="Basic and acidic residues" evidence="2">
    <location>
        <begin position="152"/>
        <end position="171"/>
    </location>
</feature>
<name>RS4_HALMA</name>
<dbReference type="EMBL" id="M87833">
    <property type="protein sequence ID" value="AAA73210.1"/>
    <property type="molecule type" value="Genomic_DNA"/>
</dbReference>
<dbReference type="EMBL" id="AY596297">
    <property type="protein sequence ID" value="AAV45141.1"/>
    <property type="molecule type" value="Genomic_DNA"/>
</dbReference>
<dbReference type="PIR" id="B44126">
    <property type="entry name" value="B44126"/>
</dbReference>
<dbReference type="RefSeq" id="WP_004593562.1">
    <property type="nucleotide sequence ID" value="NZ_CP039138.1"/>
</dbReference>
<dbReference type="SMR" id="Q00862"/>
<dbReference type="STRING" id="272569.rrnAC0059"/>
<dbReference type="PaxDb" id="272569-rrnAC0059"/>
<dbReference type="EnsemblBacteria" id="AAV45141">
    <property type="protein sequence ID" value="AAV45141"/>
    <property type="gene ID" value="rrnAC0059"/>
</dbReference>
<dbReference type="KEGG" id="hma:rrnAC0059"/>
<dbReference type="PATRIC" id="fig|272569.17.peg.869"/>
<dbReference type="eggNOG" id="arCOG04239">
    <property type="taxonomic scope" value="Archaea"/>
</dbReference>
<dbReference type="HOGENOM" id="CLU_089738_1_1_2"/>
<dbReference type="Proteomes" id="UP000001169">
    <property type="component" value="Chromosome I"/>
</dbReference>
<dbReference type="GO" id="GO:0015935">
    <property type="term" value="C:small ribosomal subunit"/>
    <property type="evidence" value="ECO:0007669"/>
    <property type="project" value="InterPro"/>
</dbReference>
<dbReference type="GO" id="GO:0019843">
    <property type="term" value="F:rRNA binding"/>
    <property type="evidence" value="ECO:0007669"/>
    <property type="project" value="UniProtKB-UniRule"/>
</dbReference>
<dbReference type="GO" id="GO:0003735">
    <property type="term" value="F:structural constituent of ribosome"/>
    <property type="evidence" value="ECO:0007669"/>
    <property type="project" value="InterPro"/>
</dbReference>
<dbReference type="GO" id="GO:0042274">
    <property type="term" value="P:ribosomal small subunit biogenesis"/>
    <property type="evidence" value="ECO:0007669"/>
    <property type="project" value="TreeGrafter"/>
</dbReference>
<dbReference type="GO" id="GO:0006412">
    <property type="term" value="P:translation"/>
    <property type="evidence" value="ECO:0007669"/>
    <property type="project" value="UniProtKB-UniRule"/>
</dbReference>
<dbReference type="CDD" id="cd00165">
    <property type="entry name" value="S4"/>
    <property type="match status" value="1"/>
</dbReference>
<dbReference type="Gene3D" id="3.10.290.10">
    <property type="entry name" value="RNA-binding S4 domain"/>
    <property type="match status" value="1"/>
</dbReference>
<dbReference type="HAMAP" id="MF_01306_A">
    <property type="entry name" value="Ribosomal_uS4_A"/>
    <property type="match status" value="1"/>
</dbReference>
<dbReference type="InterPro" id="IPR022801">
    <property type="entry name" value="Ribosomal_uS4"/>
</dbReference>
<dbReference type="InterPro" id="IPR022802">
    <property type="entry name" value="Ribosomal_uS4_arc"/>
</dbReference>
<dbReference type="InterPro" id="IPR018079">
    <property type="entry name" value="Ribosomal_uS4_CS"/>
</dbReference>
<dbReference type="InterPro" id="IPR005710">
    <property type="entry name" value="Ribosomal_uS4_euk/arc"/>
</dbReference>
<dbReference type="InterPro" id="IPR001912">
    <property type="entry name" value="Ribosomal_uS4_N"/>
</dbReference>
<dbReference type="InterPro" id="IPR002942">
    <property type="entry name" value="S4_RNA-bd"/>
</dbReference>
<dbReference type="InterPro" id="IPR036986">
    <property type="entry name" value="S4_RNA-bd_sf"/>
</dbReference>
<dbReference type="NCBIfam" id="NF003139">
    <property type="entry name" value="PRK04051.1"/>
    <property type="match status" value="1"/>
</dbReference>
<dbReference type="NCBIfam" id="TIGR01018">
    <property type="entry name" value="uS4_arch"/>
    <property type="match status" value="1"/>
</dbReference>
<dbReference type="PANTHER" id="PTHR11831">
    <property type="entry name" value="30S 40S RIBOSOMAL PROTEIN"/>
    <property type="match status" value="1"/>
</dbReference>
<dbReference type="PANTHER" id="PTHR11831:SF5">
    <property type="entry name" value="40S RIBOSOMAL PROTEIN S9"/>
    <property type="match status" value="1"/>
</dbReference>
<dbReference type="Pfam" id="PF01479">
    <property type="entry name" value="S4"/>
    <property type="match status" value="1"/>
</dbReference>
<dbReference type="SMART" id="SM01390">
    <property type="entry name" value="Ribosomal_S4"/>
    <property type="match status" value="1"/>
</dbReference>
<dbReference type="SMART" id="SM00363">
    <property type="entry name" value="S4"/>
    <property type="match status" value="1"/>
</dbReference>
<dbReference type="SUPFAM" id="SSF55174">
    <property type="entry name" value="Alpha-L RNA-binding motif"/>
    <property type="match status" value="1"/>
</dbReference>
<dbReference type="PROSITE" id="PS00632">
    <property type="entry name" value="RIBOSOMAL_S4"/>
    <property type="match status" value="1"/>
</dbReference>
<dbReference type="PROSITE" id="PS50889">
    <property type="entry name" value="S4"/>
    <property type="match status" value="1"/>
</dbReference>
<accession>Q00862</accession>
<accession>Q5V5R1</accession>
<organism>
    <name type="scientific">Haloarcula marismortui (strain ATCC 43049 / DSM 3752 / JCM 8966 / VKM B-1809)</name>
    <name type="common">Halobacterium marismortui</name>
    <dbReference type="NCBI Taxonomy" id="272569"/>
    <lineage>
        <taxon>Archaea</taxon>
        <taxon>Methanobacteriati</taxon>
        <taxon>Methanobacteriota</taxon>
        <taxon>Stenosarchaea group</taxon>
        <taxon>Halobacteria</taxon>
        <taxon>Halobacteriales</taxon>
        <taxon>Haloarculaceae</taxon>
        <taxon>Haloarcula</taxon>
    </lineage>
</organism>
<comment type="function">
    <text evidence="1">One of the primary rRNA binding proteins, it binds directly to 16S rRNA where it nucleates assembly of the body of the 30S subunit.</text>
</comment>
<comment type="function">
    <text evidence="1">With S5 and S12 plays an important role in translational accuracy.</text>
</comment>
<comment type="subunit">
    <text evidence="1">Part of the 30S ribosomal subunit. Contacts protein S5. The interaction surface between S4 and S5 is involved in control of translational fidelity.</text>
</comment>
<comment type="similarity">
    <text evidence="1">Belongs to the universal ribosomal protein uS4 family.</text>
</comment>
<keyword id="KW-1185">Reference proteome</keyword>
<keyword id="KW-0687">Ribonucleoprotein</keyword>
<keyword id="KW-0689">Ribosomal protein</keyword>
<keyword id="KW-0694">RNA-binding</keyword>
<keyword id="KW-0699">rRNA-binding</keyword>